<geneLocation type="mitochondrion"/>
<dbReference type="EMBL" id="AY324482">
    <property type="protein sequence ID" value="AAP88727.2"/>
    <property type="molecule type" value="Genomic_DNA"/>
</dbReference>
<dbReference type="SMR" id="Q7YC63"/>
<dbReference type="GO" id="GO:0005743">
    <property type="term" value="C:mitochondrial inner membrane"/>
    <property type="evidence" value="ECO:0007669"/>
    <property type="project" value="UniProtKB-SubCell"/>
</dbReference>
<dbReference type="GO" id="GO:0045275">
    <property type="term" value="C:respiratory chain complex III"/>
    <property type="evidence" value="ECO:0007669"/>
    <property type="project" value="InterPro"/>
</dbReference>
<dbReference type="GO" id="GO:0046872">
    <property type="term" value="F:metal ion binding"/>
    <property type="evidence" value="ECO:0007669"/>
    <property type="project" value="UniProtKB-KW"/>
</dbReference>
<dbReference type="GO" id="GO:0008121">
    <property type="term" value="F:ubiquinol-cytochrome-c reductase activity"/>
    <property type="evidence" value="ECO:0007669"/>
    <property type="project" value="InterPro"/>
</dbReference>
<dbReference type="GO" id="GO:0006122">
    <property type="term" value="P:mitochondrial electron transport, ubiquinol to cytochrome c"/>
    <property type="evidence" value="ECO:0007669"/>
    <property type="project" value="TreeGrafter"/>
</dbReference>
<dbReference type="CDD" id="cd00290">
    <property type="entry name" value="cytochrome_b_C"/>
    <property type="match status" value="1"/>
</dbReference>
<dbReference type="CDD" id="cd00284">
    <property type="entry name" value="Cytochrome_b_N"/>
    <property type="match status" value="1"/>
</dbReference>
<dbReference type="FunFam" id="1.20.810.10:FF:000002">
    <property type="entry name" value="Cytochrome b"/>
    <property type="match status" value="1"/>
</dbReference>
<dbReference type="Gene3D" id="1.20.810.10">
    <property type="entry name" value="Cytochrome Bc1 Complex, Chain C"/>
    <property type="match status" value="1"/>
</dbReference>
<dbReference type="InterPro" id="IPR005798">
    <property type="entry name" value="Cyt_b/b6_C"/>
</dbReference>
<dbReference type="InterPro" id="IPR036150">
    <property type="entry name" value="Cyt_b/b6_C_sf"/>
</dbReference>
<dbReference type="InterPro" id="IPR005797">
    <property type="entry name" value="Cyt_b/b6_N"/>
</dbReference>
<dbReference type="InterPro" id="IPR027387">
    <property type="entry name" value="Cytb/b6-like_sf"/>
</dbReference>
<dbReference type="InterPro" id="IPR030689">
    <property type="entry name" value="Cytochrome_b"/>
</dbReference>
<dbReference type="InterPro" id="IPR048260">
    <property type="entry name" value="Cytochrome_b_C_euk/bac"/>
</dbReference>
<dbReference type="InterPro" id="IPR048259">
    <property type="entry name" value="Cytochrome_b_N_euk/bac"/>
</dbReference>
<dbReference type="InterPro" id="IPR016174">
    <property type="entry name" value="Di-haem_cyt_TM"/>
</dbReference>
<dbReference type="PANTHER" id="PTHR19271">
    <property type="entry name" value="CYTOCHROME B"/>
    <property type="match status" value="1"/>
</dbReference>
<dbReference type="PANTHER" id="PTHR19271:SF16">
    <property type="entry name" value="CYTOCHROME B"/>
    <property type="match status" value="1"/>
</dbReference>
<dbReference type="Pfam" id="PF00032">
    <property type="entry name" value="Cytochrom_B_C"/>
    <property type="match status" value="1"/>
</dbReference>
<dbReference type="Pfam" id="PF00033">
    <property type="entry name" value="Cytochrome_B"/>
    <property type="match status" value="1"/>
</dbReference>
<dbReference type="PIRSF" id="PIRSF038885">
    <property type="entry name" value="COB"/>
    <property type="match status" value="1"/>
</dbReference>
<dbReference type="SUPFAM" id="SSF81648">
    <property type="entry name" value="a domain/subunit of cytochrome bc1 complex (Ubiquinol-cytochrome c reductase)"/>
    <property type="match status" value="1"/>
</dbReference>
<dbReference type="SUPFAM" id="SSF81342">
    <property type="entry name" value="Transmembrane di-heme cytochromes"/>
    <property type="match status" value="1"/>
</dbReference>
<dbReference type="PROSITE" id="PS51003">
    <property type="entry name" value="CYTB_CTER"/>
    <property type="match status" value="1"/>
</dbReference>
<dbReference type="PROSITE" id="PS51002">
    <property type="entry name" value="CYTB_NTER"/>
    <property type="match status" value="1"/>
</dbReference>
<sequence>MTNIRKTHPLIKIINHSFIDLPAPSNISSWWNFGSLLGLCLMIQIITGLFLAMHYTSDTTTAFSSVTHICRDVNYGWLIRYMHANGASMFFICLFIHIGRGMYYGSYTFMETWNIGVILLFAIMATAFMGYVLPWGQMSFWGATVITNLLSAIPYIGTTLVEWIWGGFSVDKATLTRFFAFHFILPFIIAALVIVHLLFLHETGSNNPTGLNSNADKIPFHPYYTIKDLLGVFMLILFLMTLVLFFPDMLGDPDNYTPANPLNTPPHIKPEWYFLFAYAILRSIPNKLGGVLALILSILILAFLPFLHTSKQRSLMFRPITQVLYWMLVANLLILTWIGGQPVEHPFIIIGQLASISYFSIILILMPISGIIEDKLLKWSL</sequence>
<gene>
    <name type="primary">MT-CYB</name>
    <name type="synonym">COB</name>
    <name type="synonym">CYTB</name>
    <name type="synonym">MTCYB</name>
</gene>
<protein>
    <recommendedName>
        <fullName>Cytochrome b</fullName>
    </recommendedName>
    <alternativeName>
        <fullName>Complex III subunit 3</fullName>
    </alternativeName>
    <alternativeName>
        <fullName>Complex III subunit III</fullName>
    </alternativeName>
    <alternativeName>
        <fullName>Cytochrome b-c1 complex subunit 3</fullName>
    </alternativeName>
    <alternativeName>
        <fullName>Ubiquinol-cytochrome-c reductase complex cytochrome b subunit</fullName>
    </alternativeName>
</protein>
<feature type="chain" id="PRO_0000254988" description="Cytochrome b">
    <location>
        <begin position="1"/>
        <end position="381"/>
    </location>
</feature>
<feature type="transmembrane region" description="Helical" evidence="2">
    <location>
        <begin position="33"/>
        <end position="53"/>
    </location>
</feature>
<feature type="transmembrane region" description="Helical" evidence="2">
    <location>
        <begin position="77"/>
        <end position="98"/>
    </location>
</feature>
<feature type="transmembrane region" description="Helical" evidence="2">
    <location>
        <begin position="113"/>
        <end position="133"/>
    </location>
</feature>
<feature type="transmembrane region" description="Helical" evidence="2">
    <location>
        <begin position="178"/>
        <end position="198"/>
    </location>
</feature>
<feature type="transmembrane region" description="Helical" evidence="2">
    <location>
        <begin position="226"/>
        <end position="246"/>
    </location>
</feature>
<feature type="transmembrane region" description="Helical" evidence="2">
    <location>
        <begin position="288"/>
        <end position="308"/>
    </location>
</feature>
<feature type="transmembrane region" description="Helical" evidence="2">
    <location>
        <begin position="320"/>
        <end position="340"/>
    </location>
</feature>
<feature type="transmembrane region" description="Helical" evidence="2">
    <location>
        <begin position="347"/>
        <end position="367"/>
    </location>
</feature>
<feature type="binding site" description="axial binding residue" evidence="2">
    <location>
        <position position="83"/>
    </location>
    <ligand>
        <name>heme b</name>
        <dbReference type="ChEBI" id="CHEBI:60344"/>
        <label>b562</label>
    </ligand>
    <ligandPart>
        <name>Fe</name>
        <dbReference type="ChEBI" id="CHEBI:18248"/>
    </ligandPart>
</feature>
<feature type="binding site" description="axial binding residue" evidence="2">
    <location>
        <position position="97"/>
    </location>
    <ligand>
        <name>heme b</name>
        <dbReference type="ChEBI" id="CHEBI:60344"/>
        <label>b566</label>
    </ligand>
    <ligandPart>
        <name>Fe</name>
        <dbReference type="ChEBI" id="CHEBI:18248"/>
    </ligandPart>
</feature>
<feature type="binding site" description="axial binding residue" evidence="2">
    <location>
        <position position="182"/>
    </location>
    <ligand>
        <name>heme b</name>
        <dbReference type="ChEBI" id="CHEBI:60344"/>
        <label>b562</label>
    </ligand>
    <ligandPart>
        <name>Fe</name>
        <dbReference type="ChEBI" id="CHEBI:18248"/>
    </ligandPart>
</feature>
<feature type="binding site" description="axial binding residue" evidence="2">
    <location>
        <position position="196"/>
    </location>
    <ligand>
        <name>heme b</name>
        <dbReference type="ChEBI" id="CHEBI:60344"/>
        <label>b566</label>
    </ligand>
    <ligandPart>
        <name>Fe</name>
        <dbReference type="ChEBI" id="CHEBI:18248"/>
    </ligandPart>
</feature>
<feature type="binding site" evidence="2">
    <location>
        <position position="201"/>
    </location>
    <ligand>
        <name>a ubiquinone</name>
        <dbReference type="ChEBI" id="CHEBI:16389"/>
    </ligand>
</feature>
<keyword id="KW-0249">Electron transport</keyword>
<keyword id="KW-0349">Heme</keyword>
<keyword id="KW-0408">Iron</keyword>
<keyword id="KW-0472">Membrane</keyword>
<keyword id="KW-0479">Metal-binding</keyword>
<keyword id="KW-0496">Mitochondrion</keyword>
<keyword id="KW-0999">Mitochondrion inner membrane</keyword>
<keyword id="KW-0679">Respiratory chain</keyword>
<keyword id="KW-0812">Transmembrane</keyword>
<keyword id="KW-1133">Transmembrane helix</keyword>
<keyword id="KW-0813">Transport</keyword>
<keyword id="KW-0830">Ubiquinone</keyword>
<organism>
    <name type="scientific">Apomys musculus</name>
    <name type="common">Least Philippine forest mouse</name>
    <dbReference type="NCBI Taxonomy" id="238007"/>
    <lineage>
        <taxon>Eukaryota</taxon>
        <taxon>Metazoa</taxon>
        <taxon>Chordata</taxon>
        <taxon>Craniata</taxon>
        <taxon>Vertebrata</taxon>
        <taxon>Euteleostomi</taxon>
        <taxon>Mammalia</taxon>
        <taxon>Eutheria</taxon>
        <taxon>Euarchontoglires</taxon>
        <taxon>Glires</taxon>
        <taxon>Rodentia</taxon>
        <taxon>Myomorpha</taxon>
        <taxon>Muroidea</taxon>
        <taxon>Muridae</taxon>
        <taxon>Murinae</taxon>
        <taxon>Apomys</taxon>
    </lineage>
</organism>
<comment type="function">
    <text evidence="2">Component of the ubiquinol-cytochrome c reductase complex (complex III or cytochrome b-c1 complex) that is part of the mitochondrial respiratory chain. The b-c1 complex mediates electron transfer from ubiquinol to cytochrome c. Contributes to the generation of a proton gradient across the mitochondrial membrane that is then used for ATP synthesis.</text>
</comment>
<comment type="cofactor">
    <cofactor evidence="2">
        <name>heme b</name>
        <dbReference type="ChEBI" id="CHEBI:60344"/>
    </cofactor>
    <text evidence="2">Binds 2 heme b groups non-covalently.</text>
</comment>
<comment type="subunit">
    <text evidence="2">The cytochrome bc1 complex contains 11 subunits: 3 respiratory subunits (MT-CYB, CYC1 and UQCRFS1), 2 core proteins (UQCRC1 and UQCRC2) and 6 low-molecular weight proteins (UQCRH/QCR6, UQCRB/QCR7, UQCRQ/QCR8, UQCR10/QCR9, UQCR11/QCR10 and a cleavage product of UQCRFS1). This cytochrome bc1 complex then forms a dimer.</text>
</comment>
<comment type="subcellular location">
    <subcellularLocation>
        <location evidence="2">Mitochondrion inner membrane</location>
        <topology evidence="2">Multi-pass membrane protein</topology>
    </subcellularLocation>
</comment>
<comment type="miscellaneous">
    <text evidence="1">Heme 1 (or BL or b562) is low-potential and absorbs at about 562 nm, and heme 2 (or BH or b566) is high-potential and absorbs at about 566 nm.</text>
</comment>
<comment type="similarity">
    <text evidence="3 4">Belongs to the cytochrome b family.</text>
</comment>
<comment type="caution">
    <text evidence="2">The full-length protein contains only eight transmembrane helices, not nine as predicted by bioinformatics tools.</text>
</comment>
<name>CYB_APOMU</name>
<accession>Q7YC63</accession>
<proteinExistence type="inferred from homology"/>
<reference key="1">
    <citation type="journal article" date="2003" name="Biol. J. Linn. Soc. Lond.">
        <title>Molecular phylogeny of the endemic Philippine rodent Apomys (Muridae) and the dynamics of diversification in an oceanic archipelago.</title>
        <authorList>
            <person name="Steppan S.J."/>
            <person name="Zawadzki C."/>
            <person name="Heaney L.R."/>
        </authorList>
    </citation>
    <scope>NUCLEOTIDE SEQUENCE [GENOMIC DNA]</scope>
</reference>
<evidence type="ECO:0000250" key="1"/>
<evidence type="ECO:0000250" key="2">
    <source>
        <dbReference type="UniProtKB" id="P00157"/>
    </source>
</evidence>
<evidence type="ECO:0000255" key="3">
    <source>
        <dbReference type="PROSITE-ProRule" id="PRU00967"/>
    </source>
</evidence>
<evidence type="ECO:0000255" key="4">
    <source>
        <dbReference type="PROSITE-ProRule" id="PRU00968"/>
    </source>
</evidence>